<protein>
    <recommendedName>
        <fullName evidence="6">Cell pattern formation-associated protein StuA</fullName>
    </recommendedName>
    <alternativeName>
        <fullName evidence="1">Stunted protein A</fullName>
    </alternativeName>
</protein>
<sequence length="644" mass="68488">MNQMQSYADVHPPHMSAATAHAPASAAPSGISHYAYPPQSSMMQPGQHQYGPTPPGYPSYGYSNGVPSGLPASSSMNNAMVPSTLQLPAMSSSGPSPSLSGAQSYAPHSFDHTGQVAPPGMKPRVTATLWEDEGSLCFQVEAKGVCVARREDNHMINGTKLLNVAGMTRGRRDGILKSEKTRHVVKIGPMHLKGVWIPFERALEFANKEKITEQLYPLFVHDIGALLYHPSNQTRASVGSAAMAAVDRRRPDSMQTQRYISGPTTSQPPSLHHHHSMSNPIGAPMSQAPHALQPHPSAGRPGLDRAHTFPTPPTSASSIMGMSNSGSSYEWSGANVQTPQGSQPLSIDTGLSNTRSVPTTPATTPPGAVQQAISYGSNQSYDNSRPMYSGPPSQPGQYNTQGQSMMGYRPDSGYTKTEMAPPSRLADVSEEGDVKHSEGMMPQGNSQVVAPAPGPEGDHEHDNEYTHSTASYNGSRGPYGYASNGNAGGLHPEHPHMSPEMNGSPHQNGSGRATPRTTTTSQTQWNSGYPTPQRQGPPSSNLYNVMSDPRGAPNGNAPHDAYPGPGAVPQYASQGYPPANGNAKRGRDDDDEDPYRPDSVQSDDMGGLKRRKTMEGGAVGGAYAQDPTPGLQRAHTMTAQRARR</sequence>
<comment type="function">
    <text evidence="1 4">Transcription factor that regulates asexual reproduction (PubMed:20495056). Binds the StuA-response elements (StRE) with the consensus sequence 5'-(A/T)CGCG(T/A)N(A/C)-3' at the promoters of target genes (By similarity). Required for pathogenicity and positively regulates the synthesis of the mycotoxin alternariol (PubMed:20495056). Acts as a positive regulator of Tox3 but is not required for the expression of ToxA (PubMed:20495056). Also acts as a central regulator of carbon metabolism including glycolysis, the TCA cycle, and amino acid synthesis (PubMed:20495056).</text>
</comment>
<comment type="subcellular location">
    <subcellularLocation>
        <location evidence="1">Nucleus</location>
    </subcellularLocation>
</comment>
<comment type="disruption phenotype">
    <text evidence="4">Produces thick white aerial hyphae but impairs sporulation (PubMed:20495056). Affects the expression of genes involved in central carbon metabolism including glycolysis, the TCA cycle, and amino acid synthesis (PubMed:20495056). Decreases pathogenicity after inoculation of detached wheat leaves (PubMed:20495056).</text>
</comment>
<comment type="similarity">
    <text evidence="6">Belongs to the EFG1/PHD1/stuA family.</text>
</comment>
<organism>
    <name type="scientific">Phaeosphaeria nodorum (strain SN15 / ATCC MYA-4574 / FGSC 10173)</name>
    <name type="common">Glume blotch fungus</name>
    <name type="synonym">Parastagonospora nodorum</name>
    <dbReference type="NCBI Taxonomy" id="321614"/>
    <lineage>
        <taxon>Eukaryota</taxon>
        <taxon>Fungi</taxon>
        <taxon>Dikarya</taxon>
        <taxon>Ascomycota</taxon>
        <taxon>Pezizomycotina</taxon>
        <taxon>Dothideomycetes</taxon>
        <taxon>Pleosporomycetidae</taxon>
        <taxon>Pleosporales</taxon>
        <taxon>Pleosporineae</taxon>
        <taxon>Phaeosphaeriaceae</taxon>
        <taxon>Parastagonospora</taxon>
    </lineage>
</organism>
<proteinExistence type="inferred from homology"/>
<evidence type="ECO:0000250" key="1">
    <source>
        <dbReference type="UniProtKB" id="P36011"/>
    </source>
</evidence>
<evidence type="ECO:0000255" key="2">
    <source>
        <dbReference type="PROSITE-ProRule" id="PRU00630"/>
    </source>
</evidence>
<evidence type="ECO:0000256" key="3">
    <source>
        <dbReference type="SAM" id="MobiDB-lite"/>
    </source>
</evidence>
<evidence type="ECO:0000269" key="4">
    <source>
    </source>
</evidence>
<evidence type="ECO:0000303" key="5">
    <source>
    </source>
</evidence>
<evidence type="ECO:0000305" key="6"/>
<dbReference type="EMBL" id="CH445358">
    <property type="protein sequence ID" value="EAT77793.2"/>
    <property type="molecule type" value="Genomic_DNA"/>
</dbReference>
<dbReference type="RefSeq" id="XP_001805109.1">
    <property type="nucleotide sequence ID" value="XM_001805057.1"/>
</dbReference>
<dbReference type="SMR" id="Q0U086"/>
<dbReference type="STRING" id="321614.Q0U086"/>
<dbReference type="EnsemblFungi" id="SNOT_14941">
    <property type="protein sequence ID" value="SNOT_14941"/>
    <property type="gene ID" value="SNOG_14941"/>
</dbReference>
<dbReference type="GeneID" id="5982036"/>
<dbReference type="KEGG" id="pno:SNOG_14941"/>
<dbReference type="VEuPathDB" id="FungiDB:JI435_149410"/>
<dbReference type="eggNOG" id="ENOG502QW2C">
    <property type="taxonomic scope" value="Eukaryota"/>
</dbReference>
<dbReference type="HOGENOM" id="CLU_016460_0_0_1"/>
<dbReference type="InParanoid" id="Q0U086"/>
<dbReference type="OrthoDB" id="5407653at2759"/>
<dbReference type="PHI-base" id="PHI:2263"/>
<dbReference type="Proteomes" id="UP000001055">
    <property type="component" value="Unassembled WGS sequence"/>
</dbReference>
<dbReference type="GO" id="GO:0005634">
    <property type="term" value="C:nucleus"/>
    <property type="evidence" value="ECO:0007669"/>
    <property type="project" value="UniProtKB-SubCell"/>
</dbReference>
<dbReference type="GO" id="GO:0003677">
    <property type="term" value="F:DNA binding"/>
    <property type="evidence" value="ECO:0007669"/>
    <property type="project" value="UniProtKB-KW"/>
</dbReference>
<dbReference type="GO" id="GO:0048315">
    <property type="term" value="P:conidium formation"/>
    <property type="evidence" value="ECO:0007669"/>
    <property type="project" value="UniProtKB-KW"/>
</dbReference>
<dbReference type="GO" id="GO:0030435">
    <property type="term" value="P:sporulation resulting in formation of a cellular spore"/>
    <property type="evidence" value="ECO:0007669"/>
    <property type="project" value="UniProtKB-KW"/>
</dbReference>
<dbReference type="FunFam" id="3.10.260.10:FF:000003">
    <property type="entry name" value="Ascospore maturation 1 protein"/>
    <property type="match status" value="1"/>
</dbReference>
<dbReference type="Gene3D" id="3.10.260.10">
    <property type="entry name" value="Transcription regulator HTH, APSES-type DNA-binding domain"/>
    <property type="match status" value="1"/>
</dbReference>
<dbReference type="InterPro" id="IPR029790">
    <property type="entry name" value="EFG1/Phd1/StuA"/>
</dbReference>
<dbReference type="InterPro" id="IPR036887">
    <property type="entry name" value="HTH_APSES_sf"/>
</dbReference>
<dbReference type="InterPro" id="IPR018004">
    <property type="entry name" value="KilA/APSES_HTH"/>
</dbReference>
<dbReference type="InterPro" id="IPR003163">
    <property type="entry name" value="Tscrpt_reg_HTH_APSES-type"/>
</dbReference>
<dbReference type="PANTHER" id="PTHR47792">
    <property type="entry name" value="PROTEIN SOK2-RELATED"/>
    <property type="match status" value="1"/>
</dbReference>
<dbReference type="PANTHER" id="PTHR47792:SF1">
    <property type="entry name" value="PROTEIN SOK2-RELATED"/>
    <property type="match status" value="1"/>
</dbReference>
<dbReference type="Pfam" id="PF04383">
    <property type="entry name" value="KilA-N"/>
    <property type="match status" value="1"/>
</dbReference>
<dbReference type="SMART" id="SM01252">
    <property type="entry name" value="KilA-N"/>
    <property type="match status" value="1"/>
</dbReference>
<dbReference type="SUPFAM" id="SSF54616">
    <property type="entry name" value="DNA-binding domain of Mlu1-box binding protein MBP1"/>
    <property type="match status" value="1"/>
</dbReference>
<dbReference type="PROSITE" id="PS51299">
    <property type="entry name" value="HTH_APSES"/>
    <property type="match status" value="1"/>
</dbReference>
<name>STUA_PHANO</name>
<gene>
    <name evidence="5" type="primary">StuA</name>
    <name type="ORF">SNOG_14941</name>
</gene>
<accession>Q0U086</accession>
<reference key="1">
    <citation type="journal article" date="2007" name="Plant Cell">
        <title>Dothideomycete-plant interactions illuminated by genome sequencing and EST analysis of the wheat pathogen Stagonospora nodorum.</title>
        <authorList>
            <person name="Hane J.K."/>
            <person name="Lowe R.G.T."/>
            <person name="Solomon P.S."/>
            <person name="Tan K.-C."/>
            <person name="Schoch C.L."/>
            <person name="Spatafora J.W."/>
            <person name="Crous P.W."/>
            <person name="Kodira C.D."/>
            <person name="Birren B.W."/>
            <person name="Galagan J.E."/>
            <person name="Torriani S.F.F."/>
            <person name="McDonald B.A."/>
            <person name="Oliver R.P."/>
        </authorList>
    </citation>
    <scope>NUCLEOTIDE SEQUENCE [LARGE SCALE GENOMIC DNA]</scope>
    <source>
        <strain>SN15 / ATCC MYA-4574 / FGSC 10173</strain>
    </source>
</reference>
<reference key="2">
    <citation type="journal article" date="2010" name="Eukaryot. Cell">
        <title>The transcription factor StuA regulates central carbon metabolism, mycotoxin production, and effector gene expression in the wheat pathogen Stagonospora nodorum.</title>
        <authorList>
            <person name="IpCho S.V."/>
            <person name="Tan K.C."/>
            <person name="Koh G."/>
            <person name="Gummer J."/>
            <person name="Oliver R.P."/>
            <person name="Trengove R.D."/>
            <person name="Solomon P.S."/>
        </authorList>
    </citation>
    <scope>FUNCTION</scope>
    <scope>DISRUPTION PHENOTYPE</scope>
</reference>
<keyword id="KW-0183">Conidiation</keyword>
<keyword id="KW-0238">DNA-binding</keyword>
<keyword id="KW-0539">Nucleus</keyword>
<keyword id="KW-0749">Sporulation</keyword>
<keyword id="KW-0804">Transcription</keyword>
<keyword id="KW-0805">Transcription regulation</keyword>
<keyword id="KW-0843">Virulence</keyword>
<feature type="chain" id="PRO_0000435982" description="Cell pattern formation-associated protein StuA">
    <location>
        <begin position="1"/>
        <end position="644"/>
    </location>
</feature>
<feature type="domain" description="HTH APSES-type" evidence="2">
    <location>
        <begin position="124"/>
        <end position="230"/>
    </location>
</feature>
<feature type="DNA-binding region" description="H-T-H motif" evidence="2">
    <location>
        <begin position="158"/>
        <end position="179"/>
    </location>
</feature>
<feature type="region of interest" description="Disordered" evidence="3">
    <location>
        <begin position="18"/>
        <end position="58"/>
    </location>
</feature>
<feature type="region of interest" description="Disordered" evidence="3">
    <location>
        <begin position="86"/>
        <end position="120"/>
    </location>
</feature>
<feature type="region of interest" description="Disordered" evidence="3">
    <location>
        <begin position="239"/>
        <end position="644"/>
    </location>
</feature>
<feature type="region of interest" description="Nuclear localization domain" evidence="1">
    <location>
        <begin position="584"/>
        <end position="612"/>
    </location>
</feature>
<feature type="compositionally biased region" description="Low complexity" evidence="3">
    <location>
        <begin position="18"/>
        <end position="33"/>
    </location>
</feature>
<feature type="compositionally biased region" description="Polar residues" evidence="3">
    <location>
        <begin position="38"/>
        <end position="47"/>
    </location>
</feature>
<feature type="compositionally biased region" description="Low complexity" evidence="3">
    <location>
        <begin position="87"/>
        <end position="104"/>
    </location>
</feature>
<feature type="compositionally biased region" description="Polar residues" evidence="3">
    <location>
        <begin position="253"/>
        <end position="269"/>
    </location>
</feature>
<feature type="compositionally biased region" description="Low complexity" evidence="3">
    <location>
        <begin position="315"/>
        <end position="328"/>
    </location>
</feature>
<feature type="compositionally biased region" description="Polar residues" evidence="3">
    <location>
        <begin position="334"/>
        <end position="357"/>
    </location>
</feature>
<feature type="compositionally biased region" description="Polar residues" evidence="3">
    <location>
        <begin position="371"/>
        <end position="383"/>
    </location>
</feature>
<feature type="compositionally biased region" description="Polar residues" evidence="3">
    <location>
        <begin position="395"/>
        <end position="404"/>
    </location>
</feature>
<feature type="compositionally biased region" description="Basic and acidic residues" evidence="3">
    <location>
        <begin position="456"/>
        <end position="465"/>
    </location>
</feature>
<feature type="compositionally biased region" description="Low complexity" evidence="3">
    <location>
        <begin position="509"/>
        <end position="524"/>
    </location>
</feature>
<feature type="compositionally biased region" description="Polar residues" evidence="3">
    <location>
        <begin position="525"/>
        <end position="544"/>
    </location>
</feature>
<feature type="compositionally biased region" description="Polar residues" evidence="3">
    <location>
        <begin position="635"/>
        <end position="644"/>
    </location>
</feature>